<gene>
    <name type="primary">acyP</name>
    <name type="ordered locus">sce7933</name>
</gene>
<proteinExistence type="inferred from homology"/>
<comment type="catalytic activity">
    <reaction>
        <text>an acyl phosphate + H2O = a carboxylate + phosphate + H(+)</text>
        <dbReference type="Rhea" id="RHEA:14965"/>
        <dbReference type="ChEBI" id="CHEBI:15377"/>
        <dbReference type="ChEBI" id="CHEBI:15378"/>
        <dbReference type="ChEBI" id="CHEBI:29067"/>
        <dbReference type="ChEBI" id="CHEBI:43474"/>
        <dbReference type="ChEBI" id="CHEBI:59918"/>
        <dbReference type="EC" id="3.6.1.7"/>
    </reaction>
</comment>
<comment type="similarity">
    <text evidence="2">Belongs to the acylphosphatase family.</text>
</comment>
<keyword id="KW-0378">Hydrolase</keyword>
<keyword id="KW-1185">Reference proteome</keyword>
<reference key="1">
    <citation type="journal article" date="2007" name="Nat. Biotechnol.">
        <title>Complete genome sequence of the myxobacterium Sorangium cellulosum.</title>
        <authorList>
            <person name="Schneiker S."/>
            <person name="Perlova O."/>
            <person name="Kaiser O."/>
            <person name="Gerth K."/>
            <person name="Alici A."/>
            <person name="Altmeyer M.O."/>
            <person name="Bartels D."/>
            <person name="Bekel T."/>
            <person name="Beyer S."/>
            <person name="Bode E."/>
            <person name="Bode H.B."/>
            <person name="Bolten C.J."/>
            <person name="Choudhuri J.V."/>
            <person name="Doss S."/>
            <person name="Elnakady Y.A."/>
            <person name="Frank B."/>
            <person name="Gaigalat L."/>
            <person name="Goesmann A."/>
            <person name="Groeger C."/>
            <person name="Gross F."/>
            <person name="Jelsbak L."/>
            <person name="Jelsbak L."/>
            <person name="Kalinowski J."/>
            <person name="Kegler C."/>
            <person name="Knauber T."/>
            <person name="Konietzny S."/>
            <person name="Kopp M."/>
            <person name="Krause L."/>
            <person name="Krug D."/>
            <person name="Linke B."/>
            <person name="Mahmud T."/>
            <person name="Martinez-Arias R."/>
            <person name="McHardy A.C."/>
            <person name="Merai M."/>
            <person name="Meyer F."/>
            <person name="Mormann S."/>
            <person name="Munoz-Dorado J."/>
            <person name="Perez J."/>
            <person name="Pradella S."/>
            <person name="Rachid S."/>
            <person name="Raddatz G."/>
            <person name="Rosenau F."/>
            <person name="Rueckert C."/>
            <person name="Sasse F."/>
            <person name="Scharfe M."/>
            <person name="Schuster S.C."/>
            <person name="Suen G."/>
            <person name="Treuner-Lange A."/>
            <person name="Velicer G.J."/>
            <person name="Vorholter F.-J."/>
            <person name="Weissman K.J."/>
            <person name="Welch R.D."/>
            <person name="Wenzel S.C."/>
            <person name="Whitworth D.E."/>
            <person name="Wilhelm S."/>
            <person name="Wittmann C."/>
            <person name="Bloecker H."/>
            <person name="Puehler A."/>
            <person name="Mueller R."/>
        </authorList>
    </citation>
    <scope>NUCLEOTIDE SEQUENCE [LARGE SCALE GENOMIC DNA]</scope>
    <source>
        <strain>So ce56</strain>
    </source>
</reference>
<sequence length="92" mass="10503">MGLKQVQLFVRGRVQGVFFRASTQREAKRLGLTGWVKNRSDGSVEVLAEGEEDELKELIAWANRGPSAARVERVDVRWRGFSGDFFDFRITD</sequence>
<dbReference type="EC" id="3.6.1.7"/>
<dbReference type="EMBL" id="AM746676">
    <property type="protein sequence ID" value="CAN98103.1"/>
    <property type="molecule type" value="Genomic_DNA"/>
</dbReference>
<dbReference type="SMR" id="A9FGA8"/>
<dbReference type="STRING" id="448385.sce7933"/>
<dbReference type="KEGG" id="scl:sce7933"/>
<dbReference type="eggNOG" id="COG1254">
    <property type="taxonomic scope" value="Bacteria"/>
</dbReference>
<dbReference type="HOGENOM" id="CLU_141932_3_2_7"/>
<dbReference type="OrthoDB" id="5295388at2"/>
<dbReference type="BioCyc" id="SCEL448385:SCE_RS40610-MONOMER"/>
<dbReference type="Proteomes" id="UP000002139">
    <property type="component" value="Chromosome"/>
</dbReference>
<dbReference type="GO" id="GO:0003998">
    <property type="term" value="F:acylphosphatase activity"/>
    <property type="evidence" value="ECO:0007669"/>
    <property type="project" value="UniProtKB-EC"/>
</dbReference>
<dbReference type="FunFam" id="3.30.70.100:FF:000012">
    <property type="entry name" value="Acylphosphatase"/>
    <property type="match status" value="1"/>
</dbReference>
<dbReference type="Gene3D" id="3.30.70.100">
    <property type="match status" value="1"/>
</dbReference>
<dbReference type="InterPro" id="IPR020456">
    <property type="entry name" value="Acylphosphatase"/>
</dbReference>
<dbReference type="InterPro" id="IPR001792">
    <property type="entry name" value="Acylphosphatase-like_dom"/>
</dbReference>
<dbReference type="InterPro" id="IPR036046">
    <property type="entry name" value="Acylphosphatase-like_dom_sf"/>
</dbReference>
<dbReference type="InterPro" id="IPR017968">
    <property type="entry name" value="Acylphosphatase_CS"/>
</dbReference>
<dbReference type="NCBIfam" id="NF011000">
    <property type="entry name" value="PRK14426.1"/>
    <property type="match status" value="1"/>
</dbReference>
<dbReference type="PANTHER" id="PTHR47268">
    <property type="entry name" value="ACYLPHOSPHATASE"/>
    <property type="match status" value="1"/>
</dbReference>
<dbReference type="PANTHER" id="PTHR47268:SF4">
    <property type="entry name" value="ACYLPHOSPHATASE"/>
    <property type="match status" value="1"/>
</dbReference>
<dbReference type="Pfam" id="PF00708">
    <property type="entry name" value="Acylphosphatase"/>
    <property type="match status" value="1"/>
</dbReference>
<dbReference type="PRINTS" id="PR00112">
    <property type="entry name" value="ACYLPHPHTASE"/>
</dbReference>
<dbReference type="SUPFAM" id="SSF54975">
    <property type="entry name" value="Acylphosphatase/BLUF domain-like"/>
    <property type="match status" value="1"/>
</dbReference>
<dbReference type="PROSITE" id="PS00150">
    <property type="entry name" value="ACYLPHOSPHATASE_1"/>
    <property type="match status" value="1"/>
</dbReference>
<dbReference type="PROSITE" id="PS00151">
    <property type="entry name" value="ACYLPHOSPHATASE_2"/>
    <property type="match status" value="1"/>
</dbReference>
<dbReference type="PROSITE" id="PS51160">
    <property type="entry name" value="ACYLPHOSPHATASE_3"/>
    <property type="match status" value="1"/>
</dbReference>
<name>ACYP_SORC5</name>
<protein>
    <recommendedName>
        <fullName>Acylphosphatase</fullName>
        <ecNumber>3.6.1.7</ecNumber>
    </recommendedName>
    <alternativeName>
        <fullName>Acylphosphate phosphohydrolase</fullName>
    </alternativeName>
</protein>
<evidence type="ECO:0000255" key="1">
    <source>
        <dbReference type="PROSITE-ProRule" id="PRU00520"/>
    </source>
</evidence>
<evidence type="ECO:0000305" key="2"/>
<feature type="chain" id="PRO_0000326806" description="Acylphosphatase">
    <location>
        <begin position="1"/>
        <end position="92"/>
    </location>
</feature>
<feature type="domain" description="Acylphosphatase-like" evidence="1">
    <location>
        <begin position="5"/>
        <end position="92"/>
    </location>
</feature>
<feature type="active site" evidence="1">
    <location>
        <position position="20"/>
    </location>
</feature>
<feature type="active site" evidence="1">
    <location>
        <position position="38"/>
    </location>
</feature>
<accession>A9FGA8</accession>
<organism>
    <name type="scientific">Sorangium cellulosum (strain So ce56)</name>
    <name type="common">Polyangium cellulosum (strain So ce56)</name>
    <dbReference type="NCBI Taxonomy" id="448385"/>
    <lineage>
        <taxon>Bacteria</taxon>
        <taxon>Pseudomonadati</taxon>
        <taxon>Myxococcota</taxon>
        <taxon>Polyangia</taxon>
        <taxon>Polyangiales</taxon>
        <taxon>Polyangiaceae</taxon>
        <taxon>Sorangium</taxon>
    </lineage>
</organism>